<reference key="1">
    <citation type="journal article" date="2004" name="Nature">
        <title>Genome evolution in yeasts.</title>
        <authorList>
            <person name="Dujon B."/>
            <person name="Sherman D."/>
            <person name="Fischer G."/>
            <person name="Durrens P."/>
            <person name="Casaregola S."/>
            <person name="Lafontaine I."/>
            <person name="de Montigny J."/>
            <person name="Marck C."/>
            <person name="Neuveglise C."/>
            <person name="Talla E."/>
            <person name="Goffard N."/>
            <person name="Frangeul L."/>
            <person name="Aigle M."/>
            <person name="Anthouard V."/>
            <person name="Babour A."/>
            <person name="Barbe V."/>
            <person name="Barnay S."/>
            <person name="Blanchin S."/>
            <person name="Beckerich J.-M."/>
            <person name="Beyne E."/>
            <person name="Bleykasten C."/>
            <person name="Boisrame A."/>
            <person name="Boyer J."/>
            <person name="Cattolico L."/>
            <person name="Confanioleri F."/>
            <person name="de Daruvar A."/>
            <person name="Despons L."/>
            <person name="Fabre E."/>
            <person name="Fairhead C."/>
            <person name="Ferry-Dumazet H."/>
            <person name="Groppi A."/>
            <person name="Hantraye F."/>
            <person name="Hennequin C."/>
            <person name="Jauniaux N."/>
            <person name="Joyet P."/>
            <person name="Kachouri R."/>
            <person name="Kerrest A."/>
            <person name="Koszul R."/>
            <person name="Lemaire M."/>
            <person name="Lesur I."/>
            <person name="Ma L."/>
            <person name="Muller H."/>
            <person name="Nicaud J.-M."/>
            <person name="Nikolski M."/>
            <person name="Oztas S."/>
            <person name="Ozier-Kalogeropoulos O."/>
            <person name="Pellenz S."/>
            <person name="Potier S."/>
            <person name="Richard G.-F."/>
            <person name="Straub M.-L."/>
            <person name="Suleau A."/>
            <person name="Swennen D."/>
            <person name="Tekaia F."/>
            <person name="Wesolowski-Louvel M."/>
            <person name="Westhof E."/>
            <person name="Wirth B."/>
            <person name="Zeniou-Meyer M."/>
            <person name="Zivanovic Y."/>
            <person name="Bolotin-Fukuhara M."/>
            <person name="Thierry A."/>
            <person name="Bouchier C."/>
            <person name="Caudron B."/>
            <person name="Scarpelli C."/>
            <person name="Gaillardin C."/>
            <person name="Weissenbach J."/>
            <person name="Wincker P."/>
            <person name="Souciet J.-L."/>
        </authorList>
    </citation>
    <scope>NUCLEOTIDE SEQUENCE [LARGE SCALE GENOMIC DNA]</scope>
    <source>
        <strain>ATCC 36239 / CBS 767 / BCRC 21394 / JCM 1990 / NBRC 0083 / IGC 2968</strain>
    </source>
</reference>
<sequence>MEDTDRTISRLWRSFKTVKEMVRDRGYYITQEEIDMSLAEFRSRICDSMNVPQRKLMCFQANPTAESLEKFPDLGSLWVEFCDEASVGIKTMRNFCIHISEKNFSTGIFIYQSSITPSANKLIPTVSPASIETFQEGDLVVNITHHDLVPKHIKLARDEKKELLERYRLKESQLPRIQREDPVGRYLGLKRGEVVKIIRRSETSGRYASYRICL</sequence>
<comment type="function">
    <text evidence="1">DNA-dependent RNA polymerase catalyzes the transcription of DNA into RNA using the four ribonucleoside triphosphates as substrates. Common component of RNA polymerases I, II and III which synthesize ribosomal RNA precursors, mRNA precursors and many functional non-coding RNAs, and small RNAs, such as 5S rRNA and tRNAs, respectively. Pol II is the central component of the basal RNA polymerase II transcription machinery. Pols are composed of mobile elements that move relative to each other. In Pol II, RPB5 is part of the lower jaw surrounding the central large cleft and thought to grab the incoming DNA template. Seems to be the major component in this process (By similarity).</text>
</comment>
<comment type="subunit">
    <text evidence="1">Component of the RNA polymerase I (Pol I), RNA polymerase II (Pol II) and RNA polymerase III (Pol III) complexes consisting of at least 14, 12 and 17 subunits, respectively.</text>
</comment>
<comment type="subcellular location">
    <subcellularLocation>
        <location evidence="1">Nucleus</location>
    </subcellularLocation>
</comment>
<comment type="similarity">
    <text evidence="2">Belongs to the archaeal Rpo5/eukaryotic RPB5 RNA polymerase subunit family.</text>
</comment>
<proteinExistence type="inferred from homology"/>
<evidence type="ECO:0000250" key="1"/>
<evidence type="ECO:0000305" key="2"/>
<organism>
    <name type="scientific">Debaryomyces hansenii (strain ATCC 36239 / CBS 767 / BCRC 21394 / JCM 1990 / NBRC 0083 / IGC 2968)</name>
    <name type="common">Yeast</name>
    <name type="synonym">Torulaspora hansenii</name>
    <dbReference type="NCBI Taxonomy" id="284592"/>
    <lineage>
        <taxon>Eukaryota</taxon>
        <taxon>Fungi</taxon>
        <taxon>Dikarya</taxon>
        <taxon>Ascomycota</taxon>
        <taxon>Saccharomycotina</taxon>
        <taxon>Pichiomycetes</taxon>
        <taxon>Debaryomycetaceae</taxon>
        <taxon>Debaryomyces</taxon>
    </lineage>
</organism>
<dbReference type="EMBL" id="CR382139">
    <property type="protein sequence ID" value="CAG90451.1"/>
    <property type="molecule type" value="Genomic_DNA"/>
</dbReference>
<dbReference type="RefSeq" id="XP_461981.1">
    <property type="nucleotide sequence ID" value="XM_461981.1"/>
</dbReference>
<dbReference type="SMR" id="Q6BIJ0"/>
<dbReference type="FunCoup" id="Q6BIJ0">
    <property type="interactions" value="1137"/>
</dbReference>
<dbReference type="STRING" id="284592.Q6BIJ0"/>
<dbReference type="GeneID" id="2904874"/>
<dbReference type="KEGG" id="dha:DEHA2G09988g"/>
<dbReference type="VEuPathDB" id="FungiDB:DEHA2G09988g"/>
<dbReference type="eggNOG" id="KOG3218">
    <property type="taxonomic scope" value="Eukaryota"/>
</dbReference>
<dbReference type="HOGENOM" id="CLU_058320_0_0_1"/>
<dbReference type="InParanoid" id="Q6BIJ0"/>
<dbReference type="OMA" id="VRDRGYF"/>
<dbReference type="OrthoDB" id="248779at2759"/>
<dbReference type="Proteomes" id="UP000000599">
    <property type="component" value="Chromosome G"/>
</dbReference>
<dbReference type="GO" id="GO:0005736">
    <property type="term" value="C:RNA polymerase I complex"/>
    <property type="evidence" value="ECO:0007669"/>
    <property type="project" value="EnsemblFungi"/>
</dbReference>
<dbReference type="GO" id="GO:0005665">
    <property type="term" value="C:RNA polymerase II, core complex"/>
    <property type="evidence" value="ECO:0007669"/>
    <property type="project" value="EnsemblFungi"/>
</dbReference>
<dbReference type="GO" id="GO:0005666">
    <property type="term" value="C:RNA polymerase III complex"/>
    <property type="evidence" value="ECO:0007669"/>
    <property type="project" value="EnsemblFungi"/>
</dbReference>
<dbReference type="GO" id="GO:0003677">
    <property type="term" value="F:DNA binding"/>
    <property type="evidence" value="ECO:0007669"/>
    <property type="project" value="InterPro"/>
</dbReference>
<dbReference type="GO" id="GO:0003899">
    <property type="term" value="F:DNA-directed RNA polymerase activity"/>
    <property type="evidence" value="ECO:0007669"/>
    <property type="project" value="EnsemblFungi"/>
</dbReference>
<dbReference type="GO" id="GO:0003968">
    <property type="term" value="F:RNA-directed RNA polymerase activity"/>
    <property type="evidence" value="ECO:0007669"/>
    <property type="project" value="EnsemblFungi"/>
</dbReference>
<dbReference type="GO" id="GO:0006363">
    <property type="term" value="P:termination of RNA polymerase I transcription"/>
    <property type="evidence" value="ECO:0007669"/>
    <property type="project" value="EnsemblFungi"/>
</dbReference>
<dbReference type="GO" id="GO:0006386">
    <property type="term" value="P:termination of RNA polymerase III transcription"/>
    <property type="evidence" value="ECO:0007669"/>
    <property type="project" value="EnsemblFungi"/>
</dbReference>
<dbReference type="GO" id="GO:0006362">
    <property type="term" value="P:transcription elongation by RNA polymerase I"/>
    <property type="evidence" value="ECO:0007669"/>
    <property type="project" value="EnsemblFungi"/>
</dbReference>
<dbReference type="GO" id="GO:0006368">
    <property type="term" value="P:transcription elongation by RNA polymerase II"/>
    <property type="evidence" value="ECO:0007669"/>
    <property type="project" value="EnsemblFungi"/>
</dbReference>
<dbReference type="GO" id="GO:0006361">
    <property type="term" value="P:transcription initiation at RNA polymerase I promoter"/>
    <property type="evidence" value="ECO:0007669"/>
    <property type="project" value="EnsemblFungi"/>
</dbReference>
<dbReference type="GO" id="GO:0006367">
    <property type="term" value="P:transcription initiation at RNA polymerase II promoter"/>
    <property type="evidence" value="ECO:0007669"/>
    <property type="project" value="EnsemblFungi"/>
</dbReference>
<dbReference type="GO" id="GO:0006384">
    <property type="term" value="P:transcription initiation at RNA polymerase III promoter"/>
    <property type="evidence" value="ECO:0007669"/>
    <property type="project" value="EnsemblFungi"/>
</dbReference>
<dbReference type="GO" id="GO:0042797">
    <property type="term" value="P:tRNA transcription by RNA polymerase III"/>
    <property type="evidence" value="ECO:0007669"/>
    <property type="project" value="EnsemblFungi"/>
</dbReference>
<dbReference type="FunFam" id="3.40.1340.10:FF:000002">
    <property type="entry name" value="DNA-directed RNA polymerases I, II, and III subunit RPABC1"/>
    <property type="match status" value="1"/>
</dbReference>
<dbReference type="FunFam" id="3.90.940.20:FF:000001">
    <property type="entry name" value="DNA-directed RNA polymerases I, II, and III subunit RPABC1"/>
    <property type="match status" value="1"/>
</dbReference>
<dbReference type="Gene3D" id="3.40.1340.10">
    <property type="entry name" value="RNA polymerase, Rpb5, N-terminal domain"/>
    <property type="match status" value="1"/>
</dbReference>
<dbReference type="Gene3D" id="3.90.940.20">
    <property type="entry name" value="RPB5-like RNA polymerase subunit"/>
    <property type="match status" value="1"/>
</dbReference>
<dbReference type="HAMAP" id="MF_00025">
    <property type="entry name" value="RNApol_Rpo5_RPB5"/>
    <property type="match status" value="1"/>
</dbReference>
<dbReference type="InterPro" id="IPR014381">
    <property type="entry name" value="Arch_Rpo5/euc_Rpb5"/>
</dbReference>
<dbReference type="InterPro" id="IPR005571">
    <property type="entry name" value="RNA_pol_Rpb5_N"/>
</dbReference>
<dbReference type="InterPro" id="IPR036710">
    <property type="entry name" value="RNA_pol_Rpb5_N_sf"/>
</dbReference>
<dbReference type="InterPro" id="IPR000783">
    <property type="entry name" value="RNA_pol_subH/Rpb5_C"/>
</dbReference>
<dbReference type="InterPro" id="IPR020608">
    <property type="entry name" value="RNA_pol_subH/Rpb5_CS"/>
</dbReference>
<dbReference type="InterPro" id="IPR035913">
    <property type="entry name" value="RPB5-like_sf"/>
</dbReference>
<dbReference type="PANTHER" id="PTHR10535">
    <property type="entry name" value="DNA-DIRECTED RNA POLYMERASES I, II, AND III SUBUNIT RPABC1"/>
    <property type="match status" value="1"/>
</dbReference>
<dbReference type="PANTHER" id="PTHR10535:SF0">
    <property type="entry name" value="DNA-DIRECTED RNA POLYMERASES I, II, AND III SUBUNIT RPABC1"/>
    <property type="match status" value="1"/>
</dbReference>
<dbReference type="Pfam" id="PF01191">
    <property type="entry name" value="RNA_pol_Rpb5_C"/>
    <property type="match status" value="1"/>
</dbReference>
<dbReference type="Pfam" id="PF03871">
    <property type="entry name" value="RNA_pol_Rpb5_N"/>
    <property type="match status" value="1"/>
</dbReference>
<dbReference type="PIRSF" id="PIRSF000747">
    <property type="entry name" value="RPB5"/>
    <property type="match status" value="1"/>
</dbReference>
<dbReference type="SUPFAM" id="SSF53036">
    <property type="entry name" value="Eukaryotic RPB5 N-terminal domain"/>
    <property type="match status" value="1"/>
</dbReference>
<dbReference type="SUPFAM" id="SSF55287">
    <property type="entry name" value="RPB5-like RNA polymerase subunit"/>
    <property type="match status" value="1"/>
</dbReference>
<dbReference type="PROSITE" id="PS01110">
    <property type="entry name" value="RNA_POL_H_23KD"/>
    <property type="match status" value="1"/>
</dbReference>
<gene>
    <name type="primary">RPB5</name>
    <name type="ordered locus">DEHA2G09988g</name>
</gene>
<protein>
    <recommendedName>
        <fullName>DNA-directed RNA polymerases I, II, and III subunit RPABC1</fullName>
        <shortName>RNA polymerases I, II, and III subunit ABC1</shortName>
    </recommendedName>
</protein>
<name>RPAB1_DEBHA</name>
<accession>Q6BIJ0</accession>
<keyword id="KW-0539">Nucleus</keyword>
<keyword id="KW-1185">Reference proteome</keyword>
<keyword id="KW-0804">Transcription</keyword>
<feature type="chain" id="PRO_0000146081" description="DNA-directed RNA polymerases I, II, and III subunit RPABC1">
    <location>
        <begin position="1"/>
        <end position="214"/>
    </location>
</feature>